<sequence length="538" mass="62974">MEIKEISVPQQGVVADYMNGKKEIQSCFDYMLTEDAFKQRVQDLREREFFRQDLVTHLLEYNTKLQAGEATIQNVKALGDENTYVVIAGQQAGLLTGPLYTIHKIISVLQLAKEKEESLGVKVVPVFWIAGEDHDMDEINHTFVTKNKKIKKTIFHDRNPKKASASESELSLEDCRKWIEEIFKTYPETNFTKDVLQFIDDSLRKSNTYVDFFGHLIMKMFVNSGLILVDSHHPELRKLEVPFFKQIVSKYKEVQEGLHNQQRVIKELGYKPIIETKSNAVHIFMEIDNERVLLEDNQGKFVGKDGTYSFSYKELIEEMERSPERFSNNVVTRPLMQEYVFPTLAFIGGPGELAYWSELQQVFHTIGFRMPPVVPRITITYIERDIATDLHDLQLQESDPFFNNVDKLRENWLSNQIEEPIDERFVEAKKEIIDIHKSLQQFVKKIDPGLSAFAGKNEFKINEQIELLERMLKRNVEKKHEVELNKFRRIQFALRPLGAPQERVWNVCYYLNQFGLDFVDRVMEKPFSWNGKHHVIKL</sequence>
<gene>
    <name evidence="1" type="primary">bshC</name>
    <name type="ordered locus">BAA_4084</name>
</gene>
<proteinExistence type="inferred from homology"/>
<feature type="chain" id="PRO_1000188714" description="Putative cysteine ligase BshC">
    <location>
        <begin position="1"/>
        <end position="538"/>
    </location>
</feature>
<feature type="coiled-coil region" evidence="1">
    <location>
        <begin position="460"/>
        <end position="484"/>
    </location>
</feature>
<comment type="function">
    <text evidence="1">Involved in bacillithiol (BSH) biosynthesis. May catalyze the last step of the pathway, the addition of cysteine to glucosamine malate (GlcN-Mal) to generate BSH.</text>
</comment>
<comment type="similarity">
    <text evidence="1">Belongs to the BshC family.</text>
</comment>
<name>BSHC_BACAA</name>
<accession>C3P689</accession>
<protein>
    <recommendedName>
        <fullName evidence="1">Putative cysteine ligase BshC</fullName>
        <ecNumber evidence="1">6.-.-.-</ecNumber>
    </recommendedName>
</protein>
<reference key="1">
    <citation type="submission" date="2009-04" db="EMBL/GenBank/DDBJ databases">
        <title>Genome sequence of Bacillus anthracis A0248.</title>
        <authorList>
            <person name="Dodson R.J."/>
            <person name="Munk A.C."/>
            <person name="Bruce D."/>
            <person name="Detter C."/>
            <person name="Tapia R."/>
            <person name="Sutton G."/>
            <person name="Sims D."/>
            <person name="Brettin T."/>
        </authorList>
    </citation>
    <scope>NUCLEOTIDE SEQUENCE [LARGE SCALE GENOMIC DNA]</scope>
    <source>
        <strain>A0248</strain>
    </source>
</reference>
<keyword id="KW-0175">Coiled coil</keyword>
<keyword id="KW-0436">Ligase</keyword>
<evidence type="ECO:0000255" key="1">
    <source>
        <dbReference type="HAMAP-Rule" id="MF_01867"/>
    </source>
</evidence>
<dbReference type="EC" id="6.-.-.-" evidence="1"/>
<dbReference type="EMBL" id="CP001598">
    <property type="protein sequence ID" value="ACQ48905.1"/>
    <property type="molecule type" value="Genomic_DNA"/>
</dbReference>
<dbReference type="RefSeq" id="WP_000403057.1">
    <property type="nucleotide sequence ID" value="NC_012659.1"/>
</dbReference>
<dbReference type="SMR" id="C3P689"/>
<dbReference type="GeneID" id="45023748"/>
<dbReference type="KEGG" id="bai:BAA_4084"/>
<dbReference type="HOGENOM" id="CLU_022249_1_0_9"/>
<dbReference type="GO" id="GO:0016874">
    <property type="term" value="F:ligase activity"/>
    <property type="evidence" value="ECO:0007669"/>
    <property type="project" value="UniProtKB-UniRule"/>
</dbReference>
<dbReference type="HAMAP" id="MF_01867">
    <property type="entry name" value="BshC"/>
    <property type="match status" value="1"/>
</dbReference>
<dbReference type="InterPro" id="IPR011199">
    <property type="entry name" value="Bacillithiol_biosynth_BshC"/>
</dbReference>
<dbReference type="InterPro" id="IPR055399">
    <property type="entry name" value="CC_BshC"/>
</dbReference>
<dbReference type="InterPro" id="IPR055398">
    <property type="entry name" value="Rossmann-like_BshC"/>
</dbReference>
<dbReference type="NCBIfam" id="TIGR03998">
    <property type="entry name" value="thiol_BshC"/>
    <property type="match status" value="1"/>
</dbReference>
<dbReference type="Pfam" id="PF24850">
    <property type="entry name" value="CC_BshC"/>
    <property type="match status" value="1"/>
</dbReference>
<dbReference type="Pfam" id="PF10079">
    <property type="entry name" value="Rossmann-like_BshC"/>
    <property type="match status" value="1"/>
</dbReference>
<dbReference type="PIRSF" id="PIRSF012535">
    <property type="entry name" value="UCP012535"/>
    <property type="match status" value="1"/>
</dbReference>
<organism>
    <name type="scientific">Bacillus anthracis (strain A0248)</name>
    <dbReference type="NCBI Taxonomy" id="592021"/>
    <lineage>
        <taxon>Bacteria</taxon>
        <taxon>Bacillati</taxon>
        <taxon>Bacillota</taxon>
        <taxon>Bacilli</taxon>
        <taxon>Bacillales</taxon>
        <taxon>Bacillaceae</taxon>
        <taxon>Bacillus</taxon>
        <taxon>Bacillus cereus group</taxon>
    </lineage>
</organism>